<protein>
    <recommendedName>
        <fullName>Repair DNA polymerase X</fullName>
        <shortName>Pol X</shortName>
        <ecNumber evidence="2">2.7.7.7</ecNumber>
    </recommendedName>
    <alternativeName>
        <fullName>AsfvPolX</fullName>
    </alternativeName>
</protein>
<evidence type="ECO:0000250" key="1"/>
<evidence type="ECO:0000250" key="2">
    <source>
        <dbReference type="UniProtKB" id="P42494"/>
    </source>
</evidence>
<evidence type="ECO:0000305" key="3"/>
<name>DPOLX_ASFK5</name>
<feature type="chain" id="PRO_0000373085" description="Repair DNA polymerase X">
    <location>
        <begin position="1"/>
        <end position="174"/>
    </location>
</feature>
<feature type="region of interest" description="Involved in ssDNA binding" evidence="1">
    <location>
        <begin position="42"/>
        <end position="51"/>
    </location>
</feature>
<feature type="binding site" evidence="2">
    <location>
        <position position="49"/>
    </location>
    <ligand>
        <name>Mg(2+)</name>
        <dbReference type="ChEBI" id="CHEBI:18420"/>
    </ligand>
</feature>
<feature type="binding site" evidence="2">
    <location>
        <position position="51"/>
    </location>
    <ligand>
        <name>Mg(2+)</name>
        <dbReference type="ChEBI" id="CHEBI:18420"/>
    </ligand>
</feature>
<feature type="binding site" evidence="2">
    <location>
        <position position="100"/>
    </location>
    <ligand>
        <name>Mg(2+)</name>
        <dbReference type="ChEBI" id="CHEBI:18420"/>
    </ligand>
</feature>
<feature type="site" description="Stabilizes dGTP in a syn conformation to overcome the Watson-Crick base pairing constraint" evidence="2">
    <location>
        <position position="115"/>
    </location>
</feature>
<feature type="disulfide bond" evidence="2">
    <location>
        <begin position="81"/>
        <end position="86"/>
    </location>
</feature>
<organismHost>
    <name type="scientific">Ornithodoros</name>
    <name type="common">relapsing fever ticks</name>
    <dbReference type="NCBI Taxonomy" id="6937"/>
</organismHost>
<organismHost>
    <name type="scientific">Phacochoerus aethiopicus</name>
    <name type="common">Warthog</name>
    <dbReference type="NCBI Taxonomy" id="85517"/>
</organismHost>
<organismHost>
    <name type="scientific">Phacochoerus africanus</name>
    <name type="common">Warthog</name>
    <dbReference type="NCBI Taxonomy" id="41426"/>
</organismHost>
<organismHost>
    <name type="scientific">Potamochoerus larvatus</name>
    <name type="common">Bushpig</name>
    <dbReference type="NCBI Taxonomy" id="273792"/>
</organismHost>
<organismHost>
    <name type="scientific">Sus scrofa</name>
    <name type="common">Pig</name>
    <dbReference type="NCBI Taxonomy" id="9823"/>
</organismHost>
<dbReference type="EC" id="2.7.7.7" evidence="2"/>
<dbReference type="EMBL" id="AY261360">
    <property type="status" value="NOT_ANNOTATED_CDS"/>
    <property type="molecule type" value="Genomic_DNA"/>
</dbReference>
<dbReference type="SMR" id="P0C986"/>
<dbReference type="Proteomes" id="UP000000861">
    <property type="component" value="Segment"/>
</dbReference>
<dbReference type="GO" id="GO:0044423">
    <property type="term" value="C:virion component"/>
    <property type="evidence" value="ECO:0007669"/>
    <property type="project" value="UniProtKB-KW"/>
</dbReference>
<dbReference type="GO" id="GO:0003677">
    <property type="term" value="F:DNA binding"/>
    <property type="evidence" value="ECO:0007669"/>
    <property type="project" value="UniProtKB-KW"/>
</dbReference>
<dbReference type="GO" id="GO:0003887">
    <property type="term" value="F:DNA-directed DNA polymerase activity"/>
    <property type="evidence" value="ECO:0007669"/>
    <property type="project" value="UniProtKB-KW"/>
</dbReference>
<dbReference type="GO" id="GO:0046872">
    <property type="term" value="F:metal ion binding"/>
    <property type="evidence" value="ECO:0007669"/>
    <property type="project" value="UniProtKB-KW"/>
</dbReference>
<dbReference type="GO" id="GO:0006303">
    <property type="term" value="P:double-strand break repair via nonhomologous end joining"/>
    <property type="evidence" value="ECO:0007669"/>
    <property type="project" value="TreeGrafter"/>
</dbReference>
<dbReference type="Gene3D" id="3.30.460.10">
    <property type="entry name" value="Beta Polymerase, domain 2"/>
    <property type="match status" value="1"/>
</dbReference>
<dbReference type="Gene3D" id="3.30.210.10">
    <property type="entry name" value="DNA polymerase, thumb domain"/>
    <property type="match status" value="1"/>
</dbReference>
<dbReference type="InterPro" id="IPR019843">
    <property type="entry name" value="DNA_pol-X_BS"/>
</dbReference>
<dbReference type="InterPro" id="IPR037160">
    <property type="entry name" value="DNA_Pol_thumb_sf"/>
</dbReference>
<dbReference type="InterPro" id="IPR022312">
    <property type="entry name" value="DNA_pol_X"/>
</dbReference>
<dbReference type="InterPro" id="IPR043519">
    <property type="entry name" value="NT_sf"/>
</dbReference>
<dbReference type="InterPro" id="IPR029398">
    <property type="entry name" value="PolB_thumb"/>
</dbReference>
<dbReference type="PANTHER" id="PTHR11276:SF28">
    <property type="entry name" value="DNA POLYMERASE LAMBDA"/>
    <property type="match status" value="1"/>
</dbReference>
<dbReference type="PANTHER" id="PTHR11276">
    <property type="entry name" value="DNA POLYMERASE TYPE-X FAMILY MEMBER"/>
    <property type="match status" value="1"/>
</dbReference>
<dbReference type="Pfam" id="PF14791">
    <property type="entry name" value="DNA_pol_B_thumb"/>
    <property type="match status" value="1"/>
</dbReference>
<dbReference type="SUPFAM" id="SSF81301">
    <property type="entry name" value="Nucleotidyltransferase"/>
    <property type="match status" value="1"/>
</dbReference>
<dbReference type="PROSITE" id="PS00522">
    <property type="entry name" value="DNA_POLYMERASE_X"/>
    <property type="match status" value="1"/>
</dbReference>
<accession>P0C986</accession>
<comment type="function">
    <text evidence="2 3">Error-prone polymerase lacking a proofreading 3'-5' exonuclease which catalyzes the gap-filling reaction during the DNA repair process (By similarity). Specifically binds intermediates in the single-nucleotide base-excision repair process (By similarity). Also catalyzes DNA polymerization with low nucleotide-insertion fidelity (By similarity). Probably acts as a strategic DNA mutase, which gives rise to a rapid emergence of variants (By similarity). Generates mismatched G-G pairs, in that case, the polymerase first binds the deoxynucleotide followed by mismatch formation (By similarity). Together with the viral DNA ligase, fills the single nucleotide gaps generated by the AP endonuclease (Probable). Binds DNA with high affinity via the helix alphaE (By similarity).</text>
</comment>
<comment type="catalytic activity">
    <reaction evidence="2">
        <text>DNA(n) + a 2'-deoxyribonucleoside 5'-triphosphate = DNA(n+1) + diphosphate</text>
        <dbReference type="Rhea" id="RHEA:22508"/>
        <dbReference type="Rhea" id="RHEA-COMP:17339"/>
        <dbReference type="Rhea" id="RHEA-COMP:17340"/>
        <dbReference type="ChEBI" id="CHEBI:33019"/>
        <dbReference type="ChEBI" id="CHEBI:61560"/>
        <dbReference type="ChEBI" id="CHEBI:173112"/>
        <dbReference type="EC" id="2.7.7.7"/>
    </reaction>
</comment>
<comment type="cofactor">
    <cofactor evidence="2">
        <name>Mg(2+)</name>
        <dbReference type="ChEBI" id="CHEBI:18420"/>
    </cofactor>
    <text evidence="2">In the presence of magnesium, pol X shows a strong preference for the ssDNA gaps having one and two nucleotides.</text>
</comment>
<comment type="subcellular location">
    <subcellularLocation>
        <location evidence="2">Virion</location>
    </subcellularLocation>
    <text evidence="2">Found in association with viral nucleoid.</text>
</comment>
<comment type="domain">
    <text evidence="2">Small DNA polymerase formed from only a palm and a C-terminal subdomain. The total DNA-binding site of pol X is composed of two DNA-binding subsites.</text>
</comment>
<comment type="miscellaneous">
    <text evidence="3">Consistent with its intracellular location, ASFV encodes its own replicative DNA polymerase and three base excision repair enzymes: a class II AP endonuclease, the repair polymerase Pol X, and an ATP-dependent DNA ligase.</text>
</comment>
<comment type="similarity">
    <text evidence="2">Belongs to the DNA polymerase type-X family.</text>
</comment>
<gene>
    <name type="ordered locus">Ken-109</name>
</gene>
<proteinExistence type="inferred from homology"/>
<reference key="1">
    <citation type="submission" date="2003-03" db="EMBL/GenBank/DDBJ databases">
        <title>African swine fever virus genomes.</title>
        <authorList>
            <person name="Kutish G.F."/>
            <person name="Rock D.L."/>
        </authorList>
    </citation>
    <scope>NUCLEOTIDE SEQUENCE [LARGE SCALE GENOMIC DNA]</scope>
</reference>
<sequence>MLTLTQGKKIVNALRSRLAFEYNGQLIKILSKNIMAVGSLRREEKMLNDVDLLIIVPEKKLLKYVLPNIRIKGLSFSVKVCGERKCVLFIEWEKKTYQLDLFTALAEEKPYAIFHFTGPVSYLIRIRAALKKKNYKLNQYGLFKNQTLVPLKITTERELIKELGFTYRVPKKRL</sequence>
<keyword id="KW-1015">Disulfide bond</keyword>
<keyword id="KW-0227">DNA damage</keyword>
<keyword id="KW-0234">DNA repair</keyword>
<keyword id="KW-0238">DNA-binding</keyword>
<keyword id="KW-0239">DNA-directed DNA polymerase</keyword>
<keyword id="KW-0460">Magnesium</keyword>
<keyword id="KW-0479">Metal-binding</keyword>
<keyword id="KW-0548">Nucleotidyltransferase</keyword>
<keyword id="KW-0808">Transferase</keyword>
<keyword id="KW-0946">Virion</keyword>
<organism>
    <name type="scientific">African swine fever virus (isolate Pig/Kenya/KEN-50/1950)</name>
    <name type="common">ASFV</name>
    <dbReference type="NCBI Taxonomy" id="561445"/>
    <lineage>
        <taxon>Viruses</taxon>
        <taxon>Varidnaviria</taxon>
        <taxon>Bamfordvirae</taxon>
        <taxon>Nucleocytoviricota</taxon>
        <taxon>Pokkesviricetes</taxon>
        <taxon>Asfuvirales</taxon>
        <taxon>Asfarviridae</taxon>
        <taxon>Asfivirus</taxon>
        <taxon>African swine fever virus</taxon>
    </lineage>
</organism>